<organism>
    <name type="scientific">Bradyrhizobium diazoefficiens (strain JCM 10833 / BCRC 13528 / IAM 13628 / NBRC 14792 / USDA 110)</name>
    <dbReference type="NCBI Taxonomy" id="224911"/>
    <lineage>
        <taxon>Bacteria</taxon>
        <taxon>Pseudomonadati</taxon>
        <taxon>Pseudomonadota</taxon>
        <taxon>Alphaproteobacteria</taxon>
        <taxon>Hyphomicrobiales</taxon>
        <taxon>Nitrobacteraceae</taxon>
        <taxon>Bradyrhizobium</taxon>
    </lineage>
</organism>
<gene>
    <name type="primary">glsA2</name>
    <name type="ordered locus">bll4798</name>
</gene>
<accession>Q89KV2</accession>
<evidence type="ECO:0000250" key="1"/>
<evidence type="ECO:0000256" key="2">
    <source>
        <dbReference type="SAM" id="MobiDB-lite"/>
    </source>
</evidence>
<evidence type="ECO:0000305" key="3"/>
<name>GLSA2_BRADU</name>
<sequence>MDTQPIRLPSVAGATRSAGYPTRPPLRRFLTDCHEEFRGDSSGELADYIPELKRANPDHFGIALVTIDGHVYEVGDSAVPFTIQSVSKAFVFALALETVGEERVSATIGVEPSGEAFNSIRLTNDNRPFNPMVNAGAIACSGLIYEVDGKGAFERVRSKLSEFAGRELGVDEAVHASETATGNRNRAIAWLLRNYAVLPDDVDAVLDVYFRQCAILVTARDLAVMAATLANRGINPVTGAQVITPHIVARTLSVMTSSGMYDYAGEWTYRVGIPAKSGVGGGIVAALPSQLGLGTFSPLLDNHFNSVRGLKVCEALSARFDLHMLNRNADVRTSVMADYDVYGISSRRSRQPHEQQILDERHSDIRIVELVGALNFGTIDYVTRRLTSEPPNAPLLIIDFRRVPDITAAGAELLGETLTALGNANVTTILSGLEEASAVWAAIAARTGDPRRLRRFALLDDAIEWAEDQVIYRFGGFTDVKESVHLGEQALLAELDTDEIAAIVKLSTTRHYTAGQRVIAAGAPANSLFFLQSGMVSVKLRSGVRLASLGPGMEFGEMAILERTRSADVFADTPVACLELPLDSFADYRRLHPETALKIMRNLAAILARRLVAANAKVDLLSAY</sequence>
<protein>
    <recommendedName>
        <fullName>Glutaminase 2</fullName>
        <ecNumber>3.5.1.2</ecNumber>
    </recommendedName>
</protein>
<proteinExistence type="inferred from homology"/>
<reference key="1">
    <citation type="journal article" date="2002" name="DNA Res.">
        <title>Complete genomic sequence of nitrogen-fixing symbiotic bacterium Bradyrhizobium japonicum USDA110.</title>
        <authorList>
            <person name="Kaneko T."/>
            <person name="Nakamura Y."/>
            <person name="Sato S."/>
            <person name="Minamisawa K."/>
            <person name="Uchiumi T."/>
            <person name="Sasamoto S."/>
            <person name="Watanabe A."/>
            <person name="Idesawa K."/>
            <person name="Iriguchi M."/>
            <person name="Kawashima K."/>
            <person name="Kohara M."/>
            <person name="Matsumoto M."/>
            <person name="Shimpo S."/>
            <person name="Tsuruoka H."/>
            <person name="Wada T."/>
            <person name="Yamada M."/>
            <person name="Tabata S."/>
        </authorList>
    </citation>
    <scope>NUCLEOTIDE SEQUENCE [LARGE SCALE GENOMIC DNA]</scope>
    <source>
        <strain>JCM 10833 / BCRC 13528 / IAM 13628 / NBRC 14792 / USDA 110</strain>
    </source>
</reference>
<feature type="chain" id="PRO_0000110598" description="Glutaminase 2">
    <location>
        <begin position="1"/>
        <end position="624"/>
    </location>
</feature>
<feature type="domain" description="STAS">
    <location>
        <begin position="355"/>
        <end position="466"/>
    </location>
</feature>
<feature type="region of interest" description="Disordered" evidence="2">
    <location>
        <begin position="1"/>
        <end position="20"/>
    </location>
</feature>
<feature type="region of interest" description="Glutaminase">
    <location>
        <begin position="43"/>
        <end position="325"/>
    </location>
</feature>
<feature type="binding site" evidence="1">
    <location>
        <position position="85"/>
    </location>
    <ligand>
        <name>substrate</name>
    </ligand>
</feature>
<feature type="binding site" evidence="1">
    <location>
        <position position="134"/>
    </location>
    <ligand>
        <name>substrate</name>
    </ligand>
</feature>
<feature type="binding site" evidence="1">
    <location>
        <position position="178"/>
    </location>
    <ligand>
        <name>substrate</name>
    </ligand>
</feature>
<feature type="binding site" evidence="1">
    <location>
        <position position="185"/>
    </location>
    <ligand>
        <name>substrate</name>
    </ligand>
</feature>
<feature type="binding site" evidence="1">
    <location>
        <position position="209"/>
    </location>
    <ligand>
        <name>substrate</name>
    </ligand>
</feature>
<feature type="binding site" evidence="1">
    <location>
        <position position="261"/>
    </location>
    <ligand>
        <name>substrate</name>
    </ligand>
</feature>
<feature type="binding site" evidence="1">
    <location>
        <position position="279"/>
    </location>
    <ligand>
        <name>substrate</name>
    </ligand>
</feature>
<feature type="binding site">
    <location>
        <begin position="491"/>
        <end position="608"/>
    </location>
    <ligand>
        <name>a nucleoside 3',5'-cyclic phosphate</name>
        <dbReference type="ChEBI" id="CHEBI:58464"/>
    </ligand>
</feature>
<comment type="catalytic activity">
    <reaction>
        <text>L-glutamine + H2O = L-glutamate + NH4(+)</text>
        <dbReference type="Rhea" id="RHEA:15889"/>
        <dbReference type="ChEBI" id="CHEBI:15377"/>
        <dbReference type="ChEBI" id="CHEBI:28938"/>
        <dbReference type="ChEBI" id="CHEBI:29985"/>
        <dbReference type="ChEBI" id="CHEBI:58359"/>
        <dbReference type="EC" id="3.5.1.2"/>
    </reaction>
</comment>
<comment type="subunit">
    <text evidence="1">Homotetramer.</text>
</comment>
<comment type="similarity">
    <text evidence="3">Belongs to the glutaminase family.</text>
</comment>
<dbReference type="EC" id="3.5.1.2"/>
<dbReference type="EMBL" id="BA000040">
    <property type="protein sequence ID" value="BAC50063.1"/>
    <property type="molecule type" value="Genomic_DNA"/>
</dbReference>
<dbReference type="RefSeq" id="NP_771438.1">
    <property type="nucleotide sequence ID" value="NC_004463.1"/>
</dbReference>
<dbReference type="RefSeq" id="WP_011087566.1">
    <property type="nucleotide sequence ID" value="NC_004463.1"/>
</dbReference>
<dbReference type="SMR" id="Q89KV2"/>
<dbReference type="STRING" id="224911.AAV28_21285"/>
<dbReference type="EnsemblBacteria" id="BAC50063">
    <property type="protein sequence ID" value="BAC50063"/>
    <property type="gene ID" value="BAC50063"/>
</dbReference>
<dbReference type="GeneID" id="46491803"/>
<dbReference type="KEGG" id="bja:bll4798"/>
<dbReference type="PATRIC" id="fig|224911.44.peg.4637"/>
<dbReference type="eggNOG" id="COG2066">
    <property type="taxonomic scope" value="Bacteria"/>
</dbReference>
<dbReference type="eggNOG" id="COG2905">
    <property type="taxonomic scope" value="Bacteria"/>
</dbReference>
<dbReference type="HOGENOM" id="CLU_027932_2_0_5"/>
<dbReference type="InParanoid" id="Q89KV2"/>
<dbReference type="OrthoDB" id="9788822at2"/>
<dbReference type="PhylomeDB" id="Q89KV2"/>
<dbReference type="Proteomes" id="UP000002526">
    <property type="component" value="Chromosome"/>
</dbReference>
<dbReference type="GO" id="GO:0004359">
    <property type="term" value="F:glutaminase activity"/>
    <property type="evidence" value="ECO:0000318"/>
    <property type="project" value="GO_Central"/>
</dbReference>
<dbReference type="GO" id="GO:0006537">
    <property type="term" value="P:glutamate biosynthetic process"/>
    <property type="evidence" value="ECO:0000318"/>
    <property type="project" value="GO_Central"/>
</dbReference>
<dbReference type="GO" id="GO:0006543">
    <property type="term" value="P:glutamine catabolic process"/>
    <property type="evidence" value="ECO:0000318"/>
    <property type="project" value="GO_Central"/>
</dbReference>
<dbReference type="CDD" id="cd00038">
    <property type="entry name" value="CAP_ED"/>
    <property type="match status" value="1"/>
</dbReference>
<dbReference type="CDD" id="cd07042">
    <property type="entry name" value="STAS_SulP_like_sulfate_transporter"/>
    <property type="match status" value="1"/>
</dbReference>
<dbReference type="FunFam" id="3.30.750.24:FF:000078">
    <property type="entry name" value="Glutaminase"/>
    <property type="match status" value="1"/>
</dbReference>
<dbReference type="FunFam" id="3.40.710.10:FF:000005">
    <property type="entry name" value="Glutaminase"/>
    <property type="match status" value="1"/>
</dbReference>
<dbReference type="FunFam" id="2.60.120.10:FF:000252">
    <property type="entry name" value="Glutaminase 2"/>
    <property type="match status" value="1"/>
</dbReference>
<dbReference type="Gene3D" id="3.40.710.10">
    <property type="entry name" value="DD-peptidase/beta-lactamase superfamily"/>
    <property type="match status" value="1"/>
</dbReference>
<dbReference type="Gene3D" id="2.60.120.10">
    <property type="entry name" value="Jelly Rolls"/>
    <property type="match status" value="1"/>
</dbReference>
<dbReference type="Gene3D" id="3.30.750.24">
    <property type="entry name" value="STAS domain"/>
    <property type="match status" value="1"/>
</dbReference>
<dbReference type="HAMAP" id="MF_00313">
    <property type="entry name" value="Glutaminase"/>
    <property type="match status" value="1"/>
</dbReference>
<dbReference type="InterPro" id="IPR012338">
    <property type="entry name" value="Beta-lactam/transpept-like"/>
</dbReference>
<dbReference type="InterPro" id="IPR018488">
    <property type="entry name" value="cNMP-bd_CS"/>
</dbReference>
<dbReference type="InterPro" id="IPR000595">
    <property type="entry name" value="cNMP-bd_dom"/>
</dbReference>
<dbReference type="InterPro" id="IPR018490">
    <property type="entry name" value="cNMP-bd_dom_sf"/>
</dbReference>
<dbReference type="InterPro" id="IPR015868">
    <property type="entry name" value="Glutaminase"/>
</dbReference>
<dbReference type="InterPro" id="IPR014710">
    <property type="entry name" value="RmlC-like_jellyroll"/>
</dbReference>
<dbReference type="InterPro" id="IPR002645">
    <property type="entry name" value="STAS_dom"/>
</dbReference>
<dbReference type="InterPro" id="IPR036513">
    <property type="entry name" value="STAS_dom_sf"/>
</dbReference>
<dbReference type="NCBIfam" id="TIGR03814">
    <property type="entry name" value="Gln_ase"/>
    <property type="match status" value="1"/>
</dbReference>
<dbReference type="PANTHER" id="PTHR12544">
    <property type="entry name" value="GLUTAMINASE"/>
    <property type="match status" value="1"/>
</dbReference>
<dbReference type="PANTHER" id="PTHR12544:SF29">
    <property type="entry name" value="GLUTAMINASE"/>
    <property type="match status" value="1"/>
</dbReference>
<dbReference type="Pfam" id="PF00027">
    <property type="entry name" value="cNMP_binding"/>
    <property type="match status" value="1"/>
</dbReference>
<dbReference type="Pfam" id="PF04960">
    <property type="entry name" value="Glutaminase"/>
    <property type="match status" value="1"/>
</dbReference>
<dbReference type="Pfam" id="PF01740">
    <property type="entry name" value="STAS"/>
    <property type="match status" value="1"/>
</dbReference>
<dbReference type="SMART" id="SM00100">
    <property type="entry name" value="cNMP"/>
    <property type="match status" value="1"/>
</dbReference>
<dbReference type="SUPFAM" id="SSF56601">
    <property type="entry name" value="beta-lactamase/transpeptidase-like"/>
    <property type="match status" value="1"/>
</dbReference>
<dbReference type="SUPFAM" id="SSF51206">
    <property type="entry name" value="cAMP-binding domain-like"/>
    <property type="match status" value="1"/>
</dbReference>
<dbReference type="SUPFAM" id="SSF52091">
    <property type="entry name" value="SpoIIaa-like"/>
    <property type="match status" value="1"/>
</dbReference>
<dbReference type="PROSITE" id="PS00888">
    <property type="entry name" value="CNMP_BINDING_1"/>
    <property type="match status" value="1"/>
</dbReference>
<dbReference type="PROSITE" id="PS50042">
    <property type="entry name" value="CNMP_BINDING_3"/>
    <property type="match status" value="1"/>
</dbReference>
<dbReference type="PROSITE" id="PS50801">
    <property type="entry name" value="STAS"/>
    <property type="match status" value="1"/>
</dbReference>
<keyword id="KW-0378">Hydrolase</keyword>
<keyword id="KW-1185">Reference proteome</keyword>